<name>TVA36_HUMAN</name>
<sequence length="113" mass="12697">MMKCPQALLAIFWLLLSWVSSEDKVVQSPLSLVVHEGDTVTLNCSYEVTNFRSLLWYKQEKKAPTFLFMLTSSGIEKKSGRLSSILDKKELFSILNITATQTGDSAIYLCAVE</sequence>
<comment type="function">
    <text evidence="3 5 6 7">V region of the variable domain of T cell receptor (TR) alpha chain that participates in the antigen recognition (PubMed:24600447). Alpha-beta T cell receptors are antigen specific receptors which are essential to the immune response and are present on the cell surface of T lymphocytes. Recognize peptide-major histocompatibility (MH) (pMH) complexes that are displayed by antigen presenting cells (APC), a prerequisite for efficient T cell adaptive immunity against pathogens (PubMed:25493333). Binding of alpha-beta TR to pMH complex initiates TR-CD3 clustering on the cell surface and intracellular activation of LCK that phosphorylates the ITAM motifs of CD3G, CD3D, CD3E and CD247 enabling the recruitment of ZAP70. In turn ZAP70 phosphorylates LAT, which recruits numerous signaling molecules to form the LAT signalosome. The LAT signalosome propagates signal branching to three major signaling pathways, the calcium, the mitogen-activated protein kinase (MAPK) kinase and the nuclear factor NF-kappa-B (NF-kB) pathways, leading to the mobilization of transcription factors that are critical for gene expression and essential for T cell growth and differentiation (PubMed:23524462). The T cell repertoire is generated in the thymus, by V-(D)-J rearrangement. This repertoire is then shaped by intrathymic selection events to generate a peripheral T cell pool of self-MH restricted, non-autoaggressive T cells. Post-thymic interaction of alpha-beta TR with the pMH complexes shapes TR structural and functional avidity (PubMed:15040585).</text>
</comment>
<comment type="subunit">
    <text evidence="4">Alpha-beta TR is a heterodimer composed of an alpha and beta chain; disulfide-linked. The alpha-beta TR is associated with the transmembrane signaling CD3 coreceptor proteins to form the TR-CD3 (TcR or TCR). The assembly of alpha-beta TR heterodimers with CD3 occurs in the endoplasmic reticulum where a single alpha-beta TR heterodimer associates with one CD3D-CD3E heterodimer, one CD3G-CD3E heterodimer and one CD247 homodimer forming a stable octameric structure. CD3D-CD3E and CD3G-CD3E heterodimers preferentially associate with TR alpha and TR beta chains, respectively. The association of the CD247 homodimer is the last step of TcR assembly in the endoplasmic reticulum and is required for transport to the cell surface.</text>
</comment>
<comment type="subcellular location">
    <subcellularLocation>
        <location evidence="4">Cell membrane</location>
    </subcellularLocation>
</comment>
<comment type="polymorphism">
    <text evidence="9">There are several alleles. The sequence shown is that of IMGT allele TRAV36/DV7*01.</text>
</comment>
<dbReference type="EMBL" id="AC245470">
    <property type="status" value="NOT_ANNOTATED_CDS"/>
    <property type="molecule type" value="Genomic_DNA"/>
</dbReference>
<dbReference type="SMR" id="A0A075B6V5"/>
<dbReference type="FunCoup" id="A0A075B6V5">
    <property type="interactions" value="327"/>
</dbReference>
<dbReference type="IMGT_GENE-DB" id="TRAV36DV7"/>
<dbReference type="GlyCosmos" id="A0A075B6V5">
    <property type="glycosylation" value="2 sites, No reported glycans"/>
</dbReference>
<dbReference type="GlyGen" id="A0A075B6V5">
    <property type="glycosylation" value="2 sites"/>
</dbReference>
<dbReference type="BioMuta" id="TRAV36DV7"/>
<dbReference type="Ensembl" id="ENST00000390463.3">
    <property type="protein sequence ID" value="ENSP00000450804.1"/>
    <property type="gene ID" value="ENSG00000211815.3"/>
</dbReference>
<dbReference type="UCSC" id="uc058zeo.1">
    <property type="organism name" value="human"/>
</dbReference>
<dbReference type="AGR" id="HGNC:12135"/>
<dbReference type="GeneCards" id="TRAV36DV7"/>
<dbReference type="HGNC" id="HGNC:12135">
    <property type="gene designation" value="TRAV36DV7"/>
</dbReference>
<dbReference type="HPA" id="ENSG00000211815">
    <property type="expression patterns" value="Tissue enriched (lymphoid)"/>
</dbReference>
<dbReference type="neXtProt" id="NX_A0A075B6V5"/>
<dbReference type="OpenTargets" id="ENSG00000211815"/>
<dbReference type="VEuPathDB" id="HostDB:ENSG00000211815"/>
<dbReference type="GeneTree" id="ENSGT00940000160183"/>
<dbReference type="HOGENOM" id="CLU_077975_8_3_1"/>
<dbReference type="InParanoid" id="A0A075B6V5"/>
<dbReference type="OMA" id="CSYEVTN"/>
<dbReference type="OrthoDB" id="8947657at2759"/>
<dbReference type="PAN-GO" id="A0A075B6V5">
    <property type="GO annotations" value="1 GO annotation based on evolutionary models"/>
</dbReference>
<dbReference type="ChiTaRS" id="TRAV36DV7">
    <property type="organism name" value="human"/>
</dbReference>
<dbReference type="Pharos" id="A0A075B6V5">
    <property type="development level" value="Tdark"/>
</dbReference>
<dbReference type="PRO" id="PR:A0A075B6V5"/>
<dbReference type="Proteomes" id="UP000005640">
    <property type="component" value="Chromosome 14"/>
</dbReference>
<dbReference type="RNAct" id="A0A075B6V5">
    <property type="molecule type" value="protein"/>
</dbReference>
<dbReference type="Bgee" id="ENSG00000211815">
    <property type="expression patterns" value="Expressed in male germ line stem cell (sensu Vertebrata) in testis and 79 other cell types or tissues"/>
</dbReference>
<dbReference type="GO" id="GO:0042101">
    <property type="term" value="C:T cell receptor complex"/>
    <property type="evidence" value="ECO:0007669"/>
    <property type="project" value="UniProtKB-KW"/>
</dbReference>
<dbReference type="GO" id="GO:0002250">
    <property type="term" value="P:adaptive immune response"/>
    <property type="evidence" value="ECO:0007669"/>
    <property type="project" value="UniProtKB-KW"/>
</dbReference>
<dbReference type="GO" id="GO:0009617">
    <property type="term" value="P:response to bacterium"/>
    <property type="evidence" value="ECO:0000318"/>
    <property type="project" value="GO_Central"/>
</dbReference>
<dbReference type="Gene3D" id="2.60.40.10">
    <property type="entry name" value="Immunoglobulins"/>
    <property type="match status" value="1"/>
</dbReference>
<dbReference type="InterPro" id="IPR007110">
    <property type="entry name" value="Ig-like_dom"/>
</dbReference>
<dbReference type="InterPro" id="IPR036179">
    <property type="entry name" value="Ig-like_dom_sf"/>
</dbReference>
<dbReference type="InterPro" id="IPR013783">
    <property type="entry name" value="Ig-like_fold"/>
</dbReference>
<dbReference type="InterPro" id="IPR013106">
    <property type="entry name" value="Ig_V-set"/>
</dbReference>
<dbReference type="InterPro" id="IPR051006">
    <property type="entry name" value="TCR_variable_domain"/>
</dbReference>
<dbReference type="PANTHER" id="PTHR19343">
    <property type="entry name" value="T CELL RECEPTOR ALPHA VARIABLE 1-2"/>
    <property type="match status" value="1"/>
</dbReference>
<dbReference type="PANTHER" id="PTHR19343:SF13">
    <property type="entry name" value="T CELL RECEPTOR ALPHA VARIABLE 21"/>
    <property type="match status" value="1"/>
</dbReference>
<dbReference type="Pfam" id="PF07686">
    <property type="entry name" value="V-set"/>
    <property type="match status" value="1"/>
</dbReference>
<dbReference type="SMART" id="SM00406">
    <property type="entry name" value="IGv"/>
    <property type="match status" value="1"/>
</dbReference>
<dbReference type="SUPFAM" id="SSF48726">
    <property type="entry name" value="Immunoglobulin"/>
    <property type="match status" value="1"/>
</dbReference>
<dbReference type="PROSITE" id="PS50835">
    <property type="entry name" value="IG_LIKE"/>
    <property type="match status" value="1"/>
</dbReference>
<proteinExistence type="evidence at protein level"/>
<feature type="signal peptide" evidence="1">
    <location>
        <begin position="1"/>
        <end position="21"/>
    </location>
</feature>
<feature type="chain" id="PRO_5001705218" description="T cell receptor alpha variable 36/delta variable 7" evidence="1">
    <location>
        <begin position="22"/>
        <end position="113"/>
    </location>
</feature>
<feature type="domain" description="Ig-like" evidence="2">
    <location>
        <begin position="23"/>
        <end position="113" status="greater than"/>
    </location>
</feature>
<feature type="glycosylation site" description="N-linked (GlcNAc...) asparagine" evidence="1">
    <location>
        <position position="43"/>
    </location>
</feature>
<feature type="glycosylation site" description="N-linked (GlcNAc...) asparagine" evidence="1">
    <location>
        <position position="96"/>
    </location>
</feature>
<feature type="disulfide bond" evidence="2">
    <location>
        <begin position="44"/>
        <end position="110"/>
    </location>
</feature>
<feature type="non-terminal residue">
    <location>
        <position position="113"/>
    </location>
</feature>
<gene>
    <name evidence="8" type="primary">TRAV36DV7</name>
</gene>
<accession>A0A075B6V5</accession>
<evidence type="ECO:0000255" key="1"/>
<evidence type="ECO:0000255" key="2">
    <source>
        <dbReference type="PROSITE-ProRule" id="PRU00114"/>
    </source>
</evidence>
<evidence type="ECO:0000303" key="3">
    <source>
    </source>
</evidence>
<evidence type="ECO:0000303" key="4">
    <source>
    </source>
</evidence>
<evidence type="ECO:0000303" key="5">
    <source>
    </source>
</evidence>
<evidence type="ECO:0000303" key="6">
    <source>
    </source>
</evidence>
<evidence type="ECO:0000303" key="7">
    <source>
    </source>
</evidence>
<evidence type="ECO:0000303" key="8">
    <source ref="2"/>
</evidence>
<evidence type="ECO:0000305" key="9"/>
<protein>
    <recommendedName>
        <fullName evidence="8">T cell receptor alpha variable 36/delta variable 7</fullName>
    </recommendedName>
</protein>
<reference key="1">
    <citation type="journal article" date="2003" name="Nature">
        <title>The DNA sequence and analysis of human chromosome 14.</title>
        <authorList>
            <person name="Heilig R."/>
            <person name="Eckenberg R."/>
            <person name="Petit J.-L."/>
            <person name="Fonknechten N."/>
            <person name="Da Silva C."/>
            <person name="Cattolico L."/>
            <person name="Levy M."/>
            <person name="Barbe V."/>
            <person name="De Berardinis V."/>
            <person name="Ureta-Vidal A."/>
            <person name="Pelletier E."/>
            <person name="Vico V."/>
            <person name="Anthouard V."/>
            <person name="Rowen L."/>
            <person name="Madan A."/>
            <person name="Qin S."/>
            <person name="Sun H."/>
            <person name="Du H."/>
            <person name="Pepin K."/>
            <person name="Artiguenave F."/>
            <person name="Robert C."/>
            <person name="Cruaud C."/>
            <person name="Bruels T."/>
            <person name="Jaillon O."/>
            <person name="Friedlander L."/>
            <person name="Samson G."/>
            <person name="Brottier P."/>
            <person name="Cure S."/>
            <person name="Segurens B."/>
            <person name="Aniere F."/>
            <person name="Samain S."/>
            <person name="Crespeau H."/>
            <person name="Abbasi N."/>
            <person name="Aiach N."/>
            <person name="Boscus D."/>
            <person name="Dickhoff R."/>
            <person name="Dors M."/>
            <person name="Dubois I."/>
            <person name="Friedman C."/>
            <person name="Gouyvenoux M."/>
            <person name="James R."/>
            <person name="Madan A."/>
            <person name="Mairey-Estrada B."/>
            <person name="Mangenot S."/>
            <person name="Martins N."/>
            <person name="Menard M."/>
            <person name="Oztas S."/>
            <person name="Ratcliffe A."/>
            <person name="Shaffer T."/>
            <person name="Trask B."/>
            <person name="Vacherie B."/>
            <person name="Bellemere C."/>
            <person name="Belser C."/>
            <person name="Besnard-Gonnet M."/>
            <person name="Bartol-Mavel D."/>
            <person name="Boutard M."/>
            <person name="Briez-Silla S."/>
            <person name="Combette S."/>
            <person name="Dufosse-Laurent V."/>
            <person name="Ferron C."/>
            <person name="Lechaplais C."/>
            <person name="Louesse C."/>
            <person name="Muselet D."/>
            <person name="Magdelenat G."/>
            <person name="Pateau E."/>
            <person name="Petit E."/>
            <person name="Sirvain-Trukniewicz P."/>
            <person name="Trybou A."/>
            <person name="Vega-Czarny N."/>
            <person name="Bataille E."/>
            <person name="Bluet E."/>
            <person name="Bordelais I."/>
            <person name="Dubois M."/>
            <person name="Dumont C."/>
            <person name="Guerin T."/>
            <person name="Haffray S."/>
            <person name="Hammadi R."/>
            <person name="Muanga J."/>
            <person name="Pellouin V."/>
            <person name="Robert D."/>
            <person name="Wunderle E."/>
            <person name="Gauguet G."/>
            <person name="Roy A."/>
            <person name="Sainte-Marthe L."/>
            <person name="Verdier J."/>
            <person name="Verdier-Discala C."/>
            <person name="Hillier L.W."/>
            <person name="Fulton L."/>
            <person name="McPherson J."/>
            <person name="Matsuda F."/>
            <person name="Wilson R."/>
            <person name="Scarpelli C."/>
            <person name="Gyapay G."/>
            <person name="Wincker P."/>
            <person name="Saurin W."/>
            <person name="Quetier F."/>
            <person name="Waterston R."/>
            <person name="Hood L."/>
            <person name="Weissenbach J."/>
        </authorList>
    </citation>
    <scope>NUCLEOTIDE SEQUENCE [LARGE SCALE GENOMIC DNA] (IMGT ALLELE TRAV36/DV7*01)</scope>
</reference>
<reference key="2">
    <citation type="book" date="2001" name="The T Cell Receptor FactsBook.">
        <title>The T Cell Receptor FactsBook.</title>
        <editorList>
            <person name="Lefranc M.P."/>
            <person name="Lefranc G."/>
        </editorList>
        <authorList>
            <person name="Lefranc M.P."/>
            <person name="Lefranc G."/>
        </authorList>
    </citation>
    <scope>NOMENCLATURE</scope>
</reference>
<reference key="3">
    <citation type="journal article" date="2004" name="Nat. Rev. Immunol.">
        <title>The many important facets of T-cell repertoire diversity.</title>
        <authorList>
            <person name="Nikolich-Zugich J."/>
            <person name="Slifka M.K."/>
            <person name="Messaoudi I."/>
        </authorList>
    </citation>
    <scope>REVIEW ON T CELL REPERTOIRE DIVERSITY</scope>
</reference>
<reference key="4">
    <citation type="journal article" date="2010" name="Cold Spring Harb. Perspect. Biol.">
        <title>Structural biology of the T-cell receptor: insights into receptor assembly, ligand recognition, and initiation of signaling.</title>
        <authorList>
            <person name="Wucherpfennig K.W."/>
            <person name="Gagnon E."/>
            <person name="Call M.J."/>
            <person name="Huseby E.S."/>
            <person name="Call M.E."/>
        </authorList>
    </citation>
    <scope>REVIEW ON T CELL RECEPTOR-CD3 COMPLEX ASSEMBLY</scope>
    <scope>SUBCELLULAR LOCATION</scope>
</reference>
<reference key="5">
    <citation type="journal article" date="2013" name="Nat. Rev. Immunol.">
        <title>T cell receptor signalling networks: branched, diversified and bounded.</title>
        <authorList>
            <person name="Brownlie R.J."/>
            <person name="Zamoyska R."/>
        </authorList>
    </citation>
    <scope>REVIEW ON T CELL RECEPTOR SIGNALING</scope>
</reference>
<reference key="6">
    <citation type="journal article" date="2014" name="Front. Immunol.">
        <title>Immunoglobulin and T Cell Receptor Genes: IMGT((R)) and the Birth and Rise of Immunoinformatics.</title>
        <authorList>
            <person name="Lefranc M.P."/>
        </authorList>
    </citation>
    <scope>NOMENCLATURE</scope>
</reference>
<reference key="7">
    <citation type="journal article" date="2015" name="Annu. Rev. Immunol.">
        <title>T cell antigen receptor recognition of antigen-presenting molecules.</title>
        <authorList>
            <person name="Rossjohn J."/>
            <person name="Gras S."/>
            <person name="Miles J.J."/>
            <person name="Turner S.J."/>
            <person name="Godfrey D.I."/>
            <person name="McCluskey J."/>
        </authorList>
    </citation>
    <scope>REVIEW ON FUNCTION</scope>
</reference>
<keyword id="KW-1064">Adaptive immunity</keyword>
<keyword id="KW-1003">Cell membrane</keyword>
<keyword id="KW-1015">Disulfide bond</keyword>
<keyword id="KW-0325">Glycoprotein</keyword>
<keyword id="KW-0391">Immunity</keyword>
<keyword id="KW-0393">Immunoglobulin domain</keyword>
<keyword id="KW-0472">Membrane</keyword>
<keyword id="KW-1267">Proteomics identification</keyword>
<keyword id="KW-0675">Receptor</keyword>
<keyword id="KW-1185">Reference proteome</keyword>
<keyword id="KW-0732">Signal</keyword>
<keyword id="KW-1279">T cell receptor</keyword>
<organism>
    <name type="scientific">Homo sapiens</name>
    <name type="common">Human</name>
    <dbReference type="NCBI Taxonomy" id="9606"/>
    <lineage>
        <taxon>Eukaryota</taxon>
        <taxon>Metazoa</taxon>
        <taxon>Chordata</taxon>
        <taxon>Craniata</taxon>
        <taxon>Vertebrata</taxon>
        <taxon>Euteleostomi</taxon>
        <taxon>Mammalia</taxon>
        <taxon>Eutheria</taxon>
        <taxon>Euarchontoglires</taxon>
        <taxon>Primates</taxon>
        <taxon>Haplorrhini</taxon>
        <taxon>Catarrhini</taxon>
        <taxon>Hominidae</taxon>
        <taxon>Homo</taxon>
    </lineage>
</organism>